<organism>
    <name type="scientific">Pseudomonas syringae pv. tomato (strain ATCC BAA-871 / DC3000)</name>
    <dbReference type="NCBI Taxonomy" id="223283"/>
    <lineage>
        <taxon>Bacteria</taxon>
        <taxon>Pseudomonadati</taxon>
        <taxon>Pseudomonadota</taxon>
        <taxon>Gammaproteobacteria</taxon>
        <taxon>Pseudomonadales</taxon>
        <taxon>Pseudomonadaceae</taxon>
        <taxon>Pseudomonas</taxon>
    </lineage>
</organism>
<gene>
    <name evidence="1" type="primary">nadD</name>
    <name type="ordered locus">PSPTO_4828</name>
</gene>
<comment type="function">
    <text evidence="1">Catalyzes the reversible adenylation of nicotinate mononucleotide (NaMN) to nicotinic acid adenine dinucleotide (NaAD).</text>
</comment>
<comment type="catalytic activity">
    <reaction evidence="1">
        <text>nicotinate beta-D-ribonucleotide + ATP + H(+) = deamido-NAD(+) + diphosphate</text>
        <dbReference type="Rhea" id="RHEA:22860"/>
        <dbReference type="ChEBI" id="CHEBI:15378"/>
        <dbReference type="ChEBI" id="CHEBI:30616"/>
        <dbReference type="ChEBI" id="CHEBI:33019"/>
        <dbReference type="ChEBI" id="CHEBI:57502"/>
        <dbReference type="ChEBI" id="CHEBI:58437"/>
        <dbReference type="EC" id="2.7.7.18"/>
    </reaction>
</comment>
<comment type="pathway">
    <text evidence="1">Cofactor biosynthesis; NAD(+) biosynthesis; deamido-NAD(+) from nicotinate D-ribonucleotide: step 1/1.</text>
</comment>
<comment type="similarity">
    <text evidence="1">Belongs to the NadD family.</text>
</comment>
<feature type="chain" id="PRO_0000181434" description="Probable nicotinate-nucleotide adenylyltransferase">
    <location>
        <begin position="1"/>
        <end position="222"/>
    </location>
</feature>
<sequence length="222" mass="24511">MTTLPRRIGMLGGTFDPVHIGHLRGALEVAELLELDELRLTPSARPPHRDMPSVTAQDRLAMVRSAVAGVSPLTVDDRELKRDKPSYTLDTLESMRAELAPRDQLFLLLGWDAFCGLPTWHRWEELLEHCHIVVLQRPDADSESPDAMRNLLAARAVSDPKALKGPGGQITFVWQTPLSVSATQIRQLLASGKSVRFLVPDAVLAYIDVHGLYRAPNTDGSP</sequence>
<dbReference type="EC" id="2.7.7.18" evidence="1"/>
<dbReference type="EMBL" id="AE016853">
    <property type="protein sequence ID" value="AAO58257.1"/>
    <property type="molecule type" value="Genomic_DNA"/>
</dbReference>
<dbReference type="RefSeq" id="NP_794562.1">
    <property type="nucleotide sequence ID" value="NC_004578.1"/>
</dbReference>
<dbReference type="SMR" id="Q87VV7"/>
<dbReference type="STRING" id="223283.PSPTO_4828"/>
<dbReference type="KEGG" id="pst:PSPTO_4828"/>
<dbReference type="PATRIC" id="fig|223283.9.peg.4940"/>
<dbReference type="eggNOG" id="COG1057">
    <property type="taxonomic scope" value="Bacteria"/>
</dbReference>
<dbReference type="HOGENOM" id="CLU_069765_0_0_6"/>
<dbReference type="OrthoDB" id="5295945at2"/>
<dbReference type="PhylomeDB" id="Q87VV7"/>
<dbReference type="UniPathway" id="UPA00253">
    <property type="reaction ID" value="UER00332"/>
</dbReference>
<dbReference type="Proteomes" id="UP000002515">
    <property type="component" value="Chromosome"/>
</dbReference>
<dbReference type="GO" id="GO:0005524">
    <property type="term" value="F:ATP binding"/>
    <property type="evidence" value="ECO:0007669"/>
    <property type="project" value="UniProtKB-KW"/>
</dbReference>
<dbReference type="GO" id="GO:0004515">
    <property type="term" value="F:nicotinate-nucleotide adenylyltransferase activity"/>
    <property type="evidence" value="ECO:0007669"/>
    <property type="project" value="UniProtKB-UniRule"/>
</dbReference>
<dbReference type="GO" id="GO:0009435">
    <property type="term" value="P:NAD biosynthetic process"/>
    <property type="evidence" value="ECO:0007669"/>
    <property type="project" value="UniProtKB-UniRule"/>
</dbReference>
<dbReference type="CDD" id="cd02165">
    <property type="entry name" value="NMNAT"/>
    <property type="match status" value="1"/>
</dbReference>
<dbReference type="Gene3D" id="3.40.50.620">
    <property type="entry name" value="HUPs"/>
    <property type="match status" value="1"/>
</dbReference>
<dbReference type="HAMAP" id="MF_00244">
    <property type="entry name" value="NaMN_adenylyltr"/>
    <property type="match status" value="1"/>
</dbReference>
<dbReference type="InterPro" id="IPR004821">
    <property type="entry name" value="Cyt_trans-like"/>
</dbReference>
<dbReference type="InterPro" id="IPR005248">
    <property type="entry name" value="NadD/NMNAT"/>
</dbReference>
<dbReference type="InterPro" id="IPR014729">
    <property type="entry name" value="Rossmann-like_a/b/a_fold"/>
</dbReference>
<dbReference type="NCBIfam" id="TIGR00125">
    <property type="entry name" value="cyt_tran_rel"/>
    <property type="match status" value="1"/>
</dbReference>
<dbReference type="NCBIfam" id="TIGR00482">
    <property type="entry name" value="nicotinate (nicotinamide) nucleotide adenylyltransferase"/>
    <property type="match status" value="1"/>
</dbReference>
<dbReference type="NCBIfam" id="NF000839">
    <property type="entry name" value="PRK00071.1-1"/>
    <property type="match status" value="1"/>
</dbReference>
<dbReference type="NCBIfam" id="NF000840">
    <property type="entry name" value="PRK00071.1-3"/>
    <property type="match status" value="1"/>
</dbReference>
<dbReference type="PANTHER" id="PTHR39321">
    <property type="entry name" value="NICOTINATE-NUCLEOTIDE ADENYLYLTRANSFERASE-RELATED"/>
    <property type="match status" value="1"/>
</dbReference>
<dbReference type="PANTHER" id="PTHR39321:SF3">
    <property type="entry name" value="PHOSPHOPANTETHEINE ADENYLYLTRANSFERASE"/>
    <property type="match status" value="1"/>
</dbReference>
<dbReference type="Pfam" id="PF01467">
    <property type="entry name" value="CTP_transf_like"/>
    <property type="match status" value="1"/>
</dbReference>
<dbReference type="SUPFAM" id="SSF52374">
    <property type="entry name" value="Nucleotidylyl transferase"/>
    <property type="match status" value="1"/>
</dbReference>
<proteinExistence type="inferred from homology"/>
<accession>Q87VV7</accession>
<keyword id="KW-0067">ATP-binding</keyword>
<keyword id="KW-0520">NAD</keyword>
<keyword id="KW-0547">Nucleotide-binding</keyword>
<keyword id="KW-0548">Nucleotidyltransferase</keyword>
<keyword id="KW-0662">Pyridine nucleotide biosynthesis</keyword>
<keyword id="KW-1185">Reference proteome</keyword>
<keyword id="KW-0808">Transferase</keyword>
<reference key="1">
    <citation type="journal article" date="2003" name="Proc. Natl. Acad. Sci. U.S.A.">
        <title>The complete genome sequence of the Arabidopsis and tomato pathogen Pseudomonas syringae pv. tomato DC3000.</title>
        <authorList>
            <person name="Buell C.R."/>
            <person name="Joardar V."/>
            <person name="Lindeberg M."/>
            <person name="Selengut J."/>
            <person name="Paulsen I.T."/>
            <person name="Gwinn M.L."/>
            <person name="Dodson R.J."/>
            <person name="DeBoy R.T."/>
            <person name="Durkin A.S."/>
            <person name="Kolonay J.F."/>
            <person name="Madupu R."/>
            <person name="Daugherty S.C."/>
            <person name="Brinkac L.M."/>
            <person name="Beanan M.J."/>
            <person name="Haft D.H."/>
            <person name="Nelson W.C."/>
            <person name="Davidsen T.M."/>
            <person name="Zafar N."/>
            <person name="Zhou L."/>
            <person name="Liu J."/>
            <person name="Yuan Q."/>
            <person name="Khouri H.M."/>
            <person name="Fedorova N.B."/>
            <person name="Tran B."/>
            <person name="Russell D."/>
            <person name="Berry K.J."/>
            <person name="Utterback T.R."/>
            <person name="Van Aken S.E."/>
            <person name="Feldblyum T.V."/>
            <person name="D'Ascenzo M."/>
            <person name="Deng W.-L."/>
            <person name="Ramos A.R."/>
            <person name="Alfano J.R."/>
            <person name="Cartinhour S."/>
            <person name="Chatterjee A.K."/>
            <person name="Delaney T.P."/>
            <person name="Lazarowitz S.G."/>
            <person name="Martin G.B."/>
            <person name="Schneider D.J."/>
            <person name="Tang X."/>
            <person name="Bender C.L."/>
            <person name="White O."/>
            <person name="Fraser C.M."/>
            <person name="Collmer A."/>
        </authorList>
    </citation>
    <scope>NUCLEOTIDE SEQUENCE [LARGE SCALE GENOMIC DNA]</scope>
    <source>
        <strain>ATCC BAA-871 / DC3000</strain>
    </source>
</reference>
<name>NADD_PSESM</name>
<evidence type="ECO:0000255" key="1">
    <source>
        <dbReference type="HAMAP-Rule" id="MF_00244"/>
    </source>
</evidence>
<protein>
    <recommendedName>
        <fullName evidence="1">Probable nicotinate-nucleotide adenylyltransferase</fullName>
        <ecNumber evidence="1">2.7.7.18</ecNumber>
    </recommendedName>
    <alternativeName>
        <fullName evidence="1">Deamido-NAD(+) diphosphorylase</fullName>
    </alternativeName>
    <alternativeName>
        <fullName evidence="1">Deamido-NAD(+) pyrophosphorylase</fullName>
    </alternativeName>
    <alternativeName>
        <fullName evidence="1">Nicotinate mononucleotide adenylyltransferase</fullName>
        <shortName evidence="1">NaMN adenylyltransferase</shortName>
    </alternativeName>
</protein>